<gene>
    <name type="primary">USP14</name>
    <name type="synonym">TGT</name>
</gene>
<comment type="function">
    <text evidence="1 7 8 9 10 11 12">Proteasome-associated deubiquitinase which releases ubiquitin from the proteasome targeted ubiquitinated proteins (PubMed:35145029). Ensures the regeneration of ubiquitin at the proteasome (PubMed:18162577, PubMed:28396413). Is a reversibly associated subunit of the proteasome and a large fraction of proteasome-free protein exists within the cell (PubMed:18162577). Required for the degradation of the chemokine receptor CXCR4 which is critical for CXCL12-induced cell chemotaxis (PubMed:19106094). Also serves as a physiological inhibitor of endoplasmic reticulum-associated degradation (ERAD) under the non-stressed condition by inhibiting the degradation of unfolded endoplasmic reticulum proteins via interaction with ERN1 (PubMed:19135427). Indispensable for synaptic development and function at neuromuscular junctions (NMJs) (By similarity). Plays a role in the innate immune defense against viruses by stabilizing the viral DNA sensor CGAS and thus inhibiting its autophagic degradation (PubMed:27666593). Inhibits OPTN-mediated selective autophagic degradation of KDM4D and thereby negatively regulates H3K9me2 and H3K9me3 (PubMed:35145029).</text>
</comment>
<comment type="catalytic activity">
    <reaction evidence="6">
        <text>Thiol-dependent hydrolysis of ester, thioester, amide, peptide and isopeptide bonds formed by the C-terminal Gly of ubiquitin (a 76-residue protein attached to proteins as an intracellular targeting signal).</text>
        <dbReference type="EC" id="3.4.19.12"/>
    </reaction>
</comment>
<comment type="subunit">
    <text evidence="5 8 9 10 12 15">Homodimer (Potential). Associates with the 26S proteasome. Interacts with FANCC, CXCR4 and ERN1. Interacts with TRIM14; this interaction recruits USP14 to cleave ubiquitin chains of CGAS and KDM4D (PubMed:27666593, PubMed:35145029).</text>
</comment>
<comment type="interaction">
    <interactant intactId="EBI-1048016">
        <id>P54578</id>
    </interactant>
    <interactant intactId="EBI-352922">
        <id>Q08209</id>
        <label>PPP3CA</label>
    </interactant>
    <organismsDiffer>false</organismsDiffer>
    <experiments>3</experiments>
</comment>
<comment type="subcellular location">
    <subcellularLocation>
        <location evidence="8">Cytoplasm</location>
    </subcellularLocation>
    <subcellularLocation>
        <location evidence="8">Cell membrane</location>
        <topology evidence="8">Peripheral membrane protein</topology>
    </subcellularLocation>
</comment>
<comment type="alternative products">
    <event type="alternative splicing"/>
    <isoform>
        <id>P54578-1</id>
        <name>1</name>
        <sequence type="displayed"/>
    </isoform>
    <isoform>
        <id>P54578-2</id>
        <name>2</name>
        <sequence type="described" ref="VSP_047343"/>
    </isoform>
    <isoform>
        <id>P54578-3</id>
        <name>3</name>
        <sequence type="described" ref="VSP_057292"/>
    </isoform>
</comment>
<comment type="similarity">
    <text evidence="15">Belongs to the peptidase C19 family. USP14/UBP6 subfamily.</text>
</comment>
<comment type="caution">
    <text evidence="15 17">Was originally thought to be a guanine tRNA-ribosyltransferase.</text>
</comment>
<comment type="sequence caution" evidence="15">
    <conflict type="frameshift">
        <sequence resource="EMBL" id="CR976282"/>
    </conflict>
</comment>
<name>UBP14_HUMAN</name>
<feature type="chain" id="PRO_0000080636" description="Ubiquitin carboxyl-terminal hydrolase 14">
    <location>
        <begin position="1"/>
        <end position="494"/>
    </location>
</feature>
<feature type="domain" description="Ubiquitin-like" evidence="2">
    <location>
        <begin position="4"/>
        <end position="80"/>
    </location>
</feature>
<feature type="domain" description="USP">
    <location>
        <begin position="105"/>
        <end position="483"/>
    </location>
</feature>
<feature type="active site" description="Nucleophile" evidence="16">
    <location>
        <position position="114"/>
    </location>
</feature>
<feature type="active site" description="Proton acceptor" evidence="3 4">
    <location>
        <position position="435"/>
    </location>
</feature>
<feature type="modified residue" description="Phosphothreonine" evidence="23">
    <location>
        <position position="52"/>
    </location>
</feature>
<feature type="modified residue" description="Phosphoserine" evidence="18 20 21 22 23 24">
    <location>
        <position position="143"/>
    </location>
</feature>
<feature type="modified residue" description="Phosphoserine" evidence="1">
    <location>
        <position position="148"/>
    </location>
</feature>
<feature type="modified residue" description="Phosphothreonine" evidence="21 24">
    <location>
        <position position="235"/>
    </location>
</feature>
<feature type="modified residue" description="Phosphoserine" evidence="23">
    <location>
        <position position="237"/>
    </location>
</feature>
<feature type="modified residue" description="Phosphoserine" evidence="23">
    <location>
        <position position="302"/>
    </location>
</feature>
<feature type="modified residue" description="Phosphoserine" evidence="23">
    <location>
        <position position="432"/>
    </location>
</feature>
<feature type="modified residue" description="N6-acetyllysine" evidence="19">
    <location>
        <position position="449"/>
    </location>
</feature>
<feature type="splice variant" id="VSP_057292" description="In isoform 3." evidence="13">
    <location>
        <begin position="55"/>
        <end position="65"/>
    </location>
</feature>
<feature type="splice variant" id="VSP_047343" description="In isoform 2." evidence="14">
    <location>
        <begin position="66"/>
        <end position="100"/>
    </location>
</feature>
<feature type="strand" evidence="27">
    <location>
        <begin position="110"/>
        <end position="112"/>
    </location>
</feature>
<feature type="helix" evidence="26">
    <location>
        <begin position="114"/>
        <end position="124"/>
    </location>
</feature>
<feature type="helix" evidence="26">
    <location>
        <begin position="127"/>
        <end position="135"/>
    </location>
</feature>
<feature type="strand" evidence="28">
    <location>
        <begin position="142"/>
        <end position="144"/>
    </location>
</feature>
<feature type="helix" evidence="26">
    <location>
        <begin position="147"/>
        <end position="165"/>
    </location>
</feature>
<feature type="strand" evidence="26">
    <location>
        <begin position="167"/>
        <end position="170"/>
    </location>
</feature>
<feature type="helix" evidence="26">
    <location>
        <begin position="173"/>
        <end position="182"/>
    </location>
</feature>
<feature type="helix" evidence="26">
    <location>
        <begin position="184"/>
        <end position="187"/>
    </location>
</feature>
<feature type="strand" evidence="28">
    <location>
        <begin position="191"/>
        <end position="193"/>
    </location>
</feature>
<feature type="helix" evidence="26">
    <location>
        <begin position="200"/>
        <end position="214"/>
    </location>
</feature>
<feature type="helix" evidence="26">
    <location>
        <begin position="242"/>
        <end position="247"/>
    </location>
</feature>
<feature type="strand" evidence="26">
    <location>
        <begin position="249"/>
        <end position="259"/>
    </location>
</feature>
<feature type="strand" evidence="26">
    <location>
        <begin position="261"/>
        <end position="263"/>
    </location>
</feature>
<feature type="strand" evidence="26">
    <location>
        <begin position="266"/>
        <end position="273"/>
    </location>
</feature>
<feature type="strand" evidence="26">
    <location>
        <begin position="275"/>
        <end position="278"/>
    </location>
</feature>
<feature type="strand" evidence="25">
    <location>
        <begin position="280"/>
        <end position="282"/>
    </location>
</feature>
<feature type="helix" evidence="26">
    <location>
        <begin position="286"/>
        <end position="293"/>
    </location>
</feature>
<feature type="strand" evidence="26">
    <location>
        <begin position="295"/>
        <end position="302"/>
    </location>
</feature>
<feature type="turn" evidence="26">
    <location>
        <begin position="303"/>
        <end position="306"/>
    </location>
</feature>
<feature type="strand" evidence="26">
    <location>
        <begin position="307"/>
        <end position="319"/>
    </location>
</feature>
<feature type="strand" evidence="26">
    <location>
        <begin position="321"/>
        <end position="329"/>
    </location>
</feature>
<feature type="strand" evidence="28">
    <location>
        <begin position="331"/>
        <end position="334"/>
    </location>
</feature>
<feature type="turn" evidence="28">
    <location>
        <begin position="335"/>
        <end position="338"/>
    </location>
</feature>
<feature type="strand" evidence="28">
    <location>
        <begin position="339"/>
        <end position="342"/>
    </location>
</feature>
<feature type="strand" evidence="26">
    <location>
        <begin position="351"/>
        <end position="354"/>
    </location>
</feature>
<feature type="helix" evidence="26">
    <location>
        <begin position="356"/>
        <end position="358"/>
    </location>
</feature>
<feature type="helix" evidence="26">
    <location>
        <begin position="361"/>
        <end position="376"/>
    </location>
</feature>
<feature type="strand" evidence="28">
    <location>
        <begin position="404"/>
        <end position="406"/>
    </location>
</feature>
<feature type="turn" evidence="25">
    <location>
        <begin position="409"/>
        <end position="412"/>
    </location>
</feature>
<feature type="strand" evidence="26">
    <location>
        <begin position="414"/>
        <end position="429"/>
    </location>
</feature>
<feature type="strand" evidence="26">
    <location>
        <begin position="435"/>
        <end position="443"/>
    </location>
</feature>
<feature type="strand" evidence="26">
    <location>
        <begin position="446"/>
        <end position="451"/>
    </location>
</feature>
<feature type="strand" evidence="26">
    <location>
        <begin position="454"/>
        <end position="458"/>
    </location>
</feature>
<feature type="helix" evidence="26">
    <location>
        <begin position="460"/>
        <end position="464"/>
    </location>
</feature>
<feature type="helix" evidence="26">
    <location>
        <begin position="465"/>
        <end position="467"/>
    </location>
</feature>
<feature type="strand" evidence="26">
    <location>
        <begin position="469"/>
        <end position="472"/>
    </location>
</feature>
<feature type="strand" evidence="26">
    <location>
        <begin position="474"/>
        <end position="482"/>
    </location>
</feature>
<dbReference type="EC" id="3.4.19.12"/>
<dbReference type="EMBL" id="U30888">
    <property type="protein sequence ID" value="AAB60365.1"/>
    <property type="molecule type" value="mRNA"/>
</dbReference>
<dbReference type="EMBL" id="BT007183">
    <property type="protein sequence ID" value="AAP35847.1"/>
    <property type="molecule type" value="mRNA"/>
</dbReference>
<dbReference type="EMBL" id="AK297605">
    <property type="protein sequence ID" value="BAH12624.1"/>
    <property type="molecule type" value="mRNA"/>
</dbReference>
<dbReference type="EMBL" id="AP000845">
    <property type="status" value="NOT_ANNOTATED_CDS"/>
    <property type="molecule type" value="Genomic_DNA"/>
</dbReference>
<dbReference type="EMBL" id="BC003556">
    <property type="protein sequence ID" value="AAH03556.1"/>
    <property type="molecule type" value="mRNA"/>
</dbReference>
<dbReference type="EMBL" id="CR976282">
    <property type="status" value="NOT_ANNOTATED_CDS"/>
    <property type="molecule type" value="mRNA"/>
</dbReference>
<dbReference type="CCDS" id="CCDS32780.1">
    <molecule id="P54578-1"/>
</dbReference>
<dbReference type="CCDS" id="CCDS32781.1">
    <molecule id="P54578-2"/>
</dbReference>
<dbReference type="PIR" id="G01932">
    <property type="entry name" value="G01932"/>
</dbReference>
<dbReference type="RefSeq" id="NP_001032411.1">
    <molecule id="P54578-2"/>
    <property type="nucleotide sequence ID" value="NM_001037334.2"/>
</dbReference>
<dbReference type="RefSeq" id="NP_005142.1">
    <molecule id="P54578-1"/>
    <property type="nucleotide sequence ID" value="NM_005151.4"/>
</dbReference>
<dbReference type="PDB" id="2AYN">
    <property type="method" value="X-ray"/>
    <property type="resolution" value="3.20 A"/>
    <property type="chains" value="A/B/C=91-494"/>
</dbReference>
<dbReference type="PDB" id="2AYO">
    <property type="method" value="X-ray"/>
    <property type="resolution" value="3.50 A"/>
    <property type="chains" value="A=91-494"/>
</dbReference>
<dbReference type="PDB" id="5GJQ">
    <property type="method" value="EM"/>
    <property type="resolution" value="4.50 A"/>
    <property type="chains" value="x=1-494"/>
</dbReference>
<dbReference type="PDB" id="6IIK">
    <property type="method" value="X-ray"/>
    <property type="resolution" value="1.97 A"/>
    <property type="chains" value="A/B=96-494"/>
</dbReference>
<dbReference type="PDB" id="6IIL">
    <property type="method" value="X-ray"/>
    <property type="resolution" value="2.20 A"/>
    <property type="chains" value="A/B=96-494"/>
</dbReference>
<dbReference type="PDB" id="6IIM">
    <property type="method" value="X-ray"/>
    <property type="resolution" value="2.21 A"/>
    <property type="chains" value="A/B=96-494"/>
</dbReference>
<dbReference type="PDB" id="6IIN">
    <property type="method" value="X-ray"/>
    <property type="resolution" value="2.53 A"/>
    <property type="chains" value="A/B=101-485"/>
</dbReference>
<dbReference type="PDB" id="6LVS">
    <property type="method" value="X-ray"/>
    <property type="resolution" value="2.73 A"/>
    <property type="chains" value="A/B/C/D/E/F=92-494"/>
</dbReference>
<dbReference type="PDB" id="7W37">
    <property type="method" value="EM"/>
    <property type="resolution" value="3.00 A"/>
    <property type="chains" value="x=1-494"/>
</dbReference>
<dbReference type="PDB" id="7W38">
    <property type="method" value="EM"/>
    <property type="resolution" value="3.10 A"/>
    <property type="chains" value="x=1-494"/>
</dbReference>
<dbReference type="PDB" id="7W39">
    <property type="method" value="EM"/>
    <property type="resolution" value="3.20 A"/>
    <property type="chains" value="x=1-494"/>
</dbReference>
<dbReference type="PDB" id="7W3A">
    <property type="method" value="EM"/>
    <property type="resolution" value="3.50 A"/>
    <property type="chains" value="x=1-494"/>
</dbReference>
<dbReference type="PDB" id="7W3B">
    <property type="method" value="EM"/>
    <property type="resolution" value="3.60 A"/>
    <property type="chains" value="x=1-494"/>
</dbReference>
<dbReference type="PDB" id="7W3C">
    <property type="method" value="EM"/>
    <property type="resolution" value="3.40 A"/>
    <property type="chains" value="x=1-494"/>
</dbReference>
<dbReference type="PDB" id="7W3F">
    <property type="method" value="EM"/>
    <property type="resolution" value="3.30 A"/>
    <property type="chains" value="x=1-494"/>
</dbReference>
<dbReference type="PDB" id="7W3G">
    <property type="method" value="EM"/>
    <property type="resolution" value="3.20 A"/>
    <property type="chains" value="x=1-494"/>
</dbReference>
<dbReference type="PDB" id="7W3H">
    <property type="method" value="EM"/>
    <property type="resolution" value="3.20 A"/>
    <property type="chains" value="x=1-494"/>
</dbReference>
<dbReference type="PDB" id="7W3I">
    <property type="method" value="EM"/>
    <property type="resolution" value="3.50 A"/>
    <property type="chains" value="x=1-494"/>
</dbReference>
<dbReference type="PDB" id="7W3J">
    <property type="method" value="EM"/>
    <property type="resolution" value="3.50 A"/>
    <property type="chains" value="x=1-494"/>
</dbReference>
<dbReference type="PDB" id="7W3K">
    <property type="method" value="EM"/>
    <property type="resolution" value="3.60 A"/>
    <property type="chains" value="x=1-494"/>
</dbReference>
<dbReference type="PDB" id="7W3M">
    <property type="method" value="EM"/>
    <property type="resolution" value="3.50 A"/>
    <property type="chains" value="x=1-494"/>
</dbReference>
<dbReference type="PDBsum" id="2AYN"/>
<dbReference type="PDBsum" id="2AYO"/>
<dbReference type="PDBsum" id="5GJQ"/>
<dbReference type="PDBsum" id="6IIK"/>
<dbReference type="PDBsum" id="6IIL"/>
<dbReference type="PDBsum" id="6IIM"/>
<dbReference type="PDBsum" id="6IIN"/>
<dbReference type="PDBsum" id="6LVS"/>
<dbReference type="PDBsum" id="7W37"/>
<dbReference type="PDBsum" id="7W38"/>
<dbReference type="PDBsum" id="7W39"/>
<dbReference type="PDBsum" id="7W3A"/>
<dbReference type="PDBsum" id="7W3B"/>
<dbReference type="PDBsum" id="7W3C"/>
<dbReference type="PDBsum" id="7W3F"/>
<dbReference type="PDBsum" id="7W3G"/>
<dbReference type="PDBsum" id="7W3H"/>
<dbReference type="PDBsum" id="7W3I"/>
<dbReference type="PDBsum" id="7W3J"/>
<dbReference type="PDBsum" id="7W3K"/>
<dbReference type="PDBsum" id="7W3M"/>
<dbReference type="BMRB" id="P54578"/>
<dbReference type="EMDB" id="EMD-32272"/>
<dbReference type="EMDB" id="EMD-32273"/>
<dbReference type="EMDB" id="EMD-32274"/>
<dbReference type="EMDB" id="EMD-32275"/>
<dbReference type="EMDB" id="EMD-32276"/>
<dbReference type="EMDB" id="EMD-32277"/>
<dbReference type="EMDB" id="EMD-32278"/>
<dbReference type="EMDB" id="EMD-32279"/>
<dbReference type="EMDB" id="EMD-32280"/>
<dbReference type="EMDB" id="EMD-32281"/>
<dbReference type="EMDB" id="EMD-32282"/>
<dbReference type="EMDB" id="EMD-32283"/>
<dbReference type="EMDB" id="EMD-32284"/>
<dbReference type="EMDB" id="EMD-9511"/>
<dbReference type="SASBDB" id="P54578"/>
<dbReference type="SMR" id="P54578"/>
<dbReference type="BioGRID" id="114551">
    <property type="interactions" value="520"/>
</dbReference>
<dbReference type="FunCoup" id="P54578">
    <property type="interactions" value="3491"/>
</dbReference>
<dbReference type="IntAct" id="P54578">
    <property type="interactions" value="52"/>
</dbReference>
<dbReference type="MINT" id="P54578"/>
<dbReference type="STRING" id="9606.ENSP00000261601"/>
<dbReference type="BindingDB" id="P54578"/>
<dbReference type="ChEMBL" id="CHEMBL1293295"/>
<dbReference type="DrugBank" id="DB12695">
    <property type="generic name" value="Phenethyl Isothiocyanate"/>
</dbReference>
<dbReference type="GuidetoPHARMACOLOGY" id="2429"/>
<dbReference type="MEROPS" id="C19.015"/>
<dbReference type="GlyCosmos" id="P54578">
    <property type="glycosylation" value="2 sites, 1 glycan"/>
</dbReference>
<dbReference type="GlyGen" id="P54578">
    <property type="glycosylation" value="7 sites, 1 O-linked glycan (7 sites)"/>
</dbReference>
<dbReference type="iPTMnet" id="P54578"/>
<dbReference type="MetOSite" id="P54578"/>
<dbReference type="PhosphoSitePlus" id="P54578"/>
<dbReference type="SwissPalm" id="P54578"/>
<dbReference type="BioMuta" id="USP14"/>
<dbReference type="DMDM" id="1729927"/>
<dbReference type="OGP" id="P54578"/>
<dbReference type="jPOST" id="P54578"/>
<dbReference type="MassIVE" id="P54578"/>
<dbReference type="PaxDb" id="9606-ENSP00000261601"/>
<dbReference type="PeptideAtlas" id="P54578"/>
<dbReference type="ProteomicsDB" id="56687">
    <molecule id="P54578-1"/>
</dbReference>
<dbReference type="ProteomicsDB" id="6620"/>
<dbReference type="Pumba" id="P54578"/>
<dbReference type="Antibodypedia" id="676">
    <property type="antibodies" value="329 antibodies from 35 providers"/>
</dbReference>
<dbReference type="DNASU" id="9097"/>
<dbReference type="Ensembl" id="ENST00000261601.8">
    <molecule id="P54578-1"/>
    <property type="protein sequence ID" value="ENSP00000261601.6"/>
    <property type="gene ID" value="ENSG00000101557.15"/>
</dbReference>
<dbReference type="Ensembl" id="ENST00000400266.7">
    <molecule id="P54578-3"/>
    <property type="protein sequence ID" value="ENSP00000383125.3"/>
    <property type="gene ID" value="ENSG00000101557.15"/>
</dbReference>
<dbReference type="Ensembl" id="ENST00000582707.5">
    <molecule id="P54578-2"/>
    <property type="protein sequence ID" value="ENSP00000464447.1"/>
    <property type="gene ID" value="ENSG00000101557.15"/>
</dbReference>
<dbReference type="GeneID" id="9097"/>
<dbReference type="KEGG" id="hsa:9097"/>
<dbReference type="MANE-Select" id="ENST00000261601.8">
    <property type="protein sequence ID" value="ENSP00000261601.6"/>
    <property type="RefSeq nucleotide sequence ID" value="NM_005151.4"/>
    <property type="RefSeq protein sequence ID" value="NP_005142.1"/>
</dbReference>
<dbReference type="UCSC" id="uc002kkf.2">
    <molecule id="P54578-1"/>
    <property type="organism name" value="human"/>
</dbReference>
<dbReference type="AGR" id="HGNC:12612"/>
<dbReference type="CTD" id="9097"/>
<dbReference type="DisGeNET" id="9097"/>
<dbReference type="GeneCards" id="USP14"/>
<dbReference type="HGNC" id="HGNC:12612">
    <property type="gene designation" value="USP14"/>
</dbReference>
<dbReference type="HPA" id="ENSG00000101557">
    <property type="expression patterns" value="Low tissue specificity"/>
</dbReference>
<dbReference type="MIM" id="607274">
    <property type="type" value="gene"/>
</dbReference>
<dbReference type="neXtProt" id="NX_P54578"/>
<dbReference type="OpenTargets" id="ENSG00000101557"/>
<dbReference type="PharmGKB" id="PA37238"/>
<dbReference type="VEuPathDB" id="HostDB:ENSG00000101557"/>
<dbReference type="eggNOG" id="KOG1872">
    <property type="taxonomic scope" value="Eukaryota"/>
</dbReference>
<dbReference type="GeneTree" id="ENSGT00390000009615"/>
<dbReference type="InParanoid" id="P54578"/>
<dbReference type="OMA" id="FKSDAEY"/>
<dbReference type="OrthoDB" id="333239at2759"/>
<dbReference type="PAN-GO" id="P54578">
    <property type="GO annotations" value="4 GO annotations based on evolutionary models"/>
</dbReference>
<dbReference type="PhylomeDB" id="P54578"/>
<dbReference type="TreeFam" id="TF314494"/>
<dbReference type="PathwayCommons" id="P54578"/>
<dbReference type="Reactome" id="R-HSA-5689880">
    <property type="pathway name" value="Ub-specific processing proteases"/>
</dbReference>
<dbReference type="Reactome" id="R-HSA-9758274">
    <property type="pathway name" value="Regulation of NF-kappa B signaling"/>
</dbReference>
<dbReference type="SignaLink" id="P54578"/>
<dbReference type="SIGNOR" id="P54578"/>
<dbReference type="BioGRID-ORCS" id="9097">
    <property type="hits" value="100 hits in 1167 CRISPR screens"/>
</dbReference>
<dbReference type="CD-CODE" id="FB4E32DD">
    <property type="entry name" value="Presynaptic clusters and postsynaptic densities"/>
</dbReference>
<dbReference type="ChiTaRS" id="USP14">
    <property type="organism name" value="human"/>
</dbReference>
<dbReference type="EvolutionaryTrace" id="P54578"/>
<dbReference type="GeneWiki" id="USP14"/>
<dbReference type="GenomeRNAi" id="9097"/>
<dbReference type="Pharos" id="P54578">
    <property type="development level" value="Tchem"/>
</dbReference>
<dbReference type="PRO" id="PR:P54578"/>
<dbReference type="Proteomes" id="UP000005640">
    <property type="component" value="Chromosome 18"/>
</dbReference>
<dbReference type="RNAct" id="P54578">
    <property type="molecule type" value="protein"/>
</dbReference>
<dbReference type="Bgee" id="ENSG00000101557">
    <property type="expression patterns" value="Expressed in secondary oocyte and 221 other cell types or tissues"/>
</dbReference>
<dbReference type="ExpressionAtlas" id="P54578">
    <property type="expression patterns" value="baseline and differential"/>
</dbReference>
<dbReference type="GO" id="GO:0009986">
    <property type="term" value="C:cell surface"/>
    <property type="evidence" value="ECO:0000314"/>
    <property type="project" value="UniProtKB"/>
</dbReference>
<dbReference type="GO" id="GO:0005737">
    <property type="term" value="C:cytoplasm"/>
    <property type="evidence" value="ECO:0000314"/>
    <property type="project" value="UniProt"/>
</dbReference>
<dbReference type="GO" id="GO:0031410">
    <property type="term" value="C:cytoplasmic vesicle"/>
    <property type="evidence" value="ECO:0000314"/>
    <property type="project" value="UniProtKB"/>
</dbReference>
<dbReference type="GO" id="GO:0005829">
    <property type="term" value="C:cytosol"/>
    <property type="evidence" value="ECO:0000314"/>
    <property type="project" value="HPA"/>
</dbReference>
<dbReference type="GO" id="GO:0005783">
    <property type="term" value="C:endoplasmic reticulum"/>
    <property type="evidence" value="ECO:0000314"/>
    <property type="project" value="HPA"/>
</dbReference>
<dbReference type="GO" id="GO:0070062">
    <property type="term" value="C:extracellular exosome"/>
    <property type="evidence" value="ECO:0007005"/>
    <property type="project" value="UniProtKB"/>
</dbReference>
<dbReference type="GO" id="GO:0098978">
    <property type="term" value="C:glutamatergic synapse"/>
    <property type="evidence" value="ECO:0007669"/>
    <property type="project" value="Ensembl"/>
</dbReference>
<dbReference type="GO" id="GO:0005730">
    <property type="term" value="C:nucleolus"/>
    <property type="evidence" value="ECO:0000314"/>
    <property type="project" value="HPA"/>
</dbReference>
<dbReference type="GO" id="GO:0005886">
    <property type="term" value="C:plasma membrane"/>
    <property type="evidence" value="ECO:0000314"/>
    <property type="project" value="HPA"/>
</dbReference>
<dbReference type="GO" id="GO:0099523">
    <property type="term" value="C:presynaptic cytosol"/>
    <property type="evidence" value="ECO:0007669"/>
    <property type="project" value="Ensembl"/>
</dbReference>
<dbReference type="GO" id="GO:0000502">
    <property type="term" value="C:proteasome complex"/>
    <property type="evidence" value="ECO:0007669"/>
    <property type="project" value="UniProtKB-KW"/>
</dbReference>
<dbReference type="GO" id="GO:0004843">
    <property type="term" value="F:cysteine-type deubiquitinase activity"/>
    <property type="evidence" value="ECO:0000314"/>
    <property type="project" value="UniProtKB"/>
</dbReference>
<dbReference type="GO" id="GO:0004197">
    <property type="term" value="F:cysteine-type endopeptidase activity"/>
    <property type="evidence" value="ECO:0000304"/>
    <property type="project" value="ProtInc"/>
</dbReference>
<dbReference type="GO" id="GO:0101005">
    <property type="term" value="F:deubiquitinase activity"/>
    <property type="evidence" value="ECO:0000315"/>
    <property type="project" value="ParkinsonsUK-UCL"/>
</dbReference>
<dbReference type="GO" id="GO:0004866">
    <property type="term" value="F:endopeptidase inhibitor activity"/>
    <property type="evidence" value="ECO:0000315"/>
    <property type="project" value="UniProtKB"/>
</dbReference>
<dbReference type="GO" id="GO:0061578">
    <property type="term" value="F:K63-linked deubiquitinase activity"/>
    <property type="evidence" value="ECO:0000269"/>
    <property type="project" value="Reactome"/>
</dbReference>
<dbReference type="GO" id="GO:0070628">
    <property type="term" value="F:proteasome binding"/>
    <property type="evidence" value="ECO:0000314"/>
    <property type="project" value="UniProtKB"/>
</dbReference>
<dbReference type="GO" id="GO:0007268">
    <property type="term" value="P:chemical synaptic transmission"/>
    <property type="evidence" value="ECO:0007669"/>
    <property type="project" value="Ensembl"/>
</dbReference>
<dbReference type="GO" id="GO:0045087">
    <property type="term" value="P:innate immune response"/>
    <property type="evidence" value="ECO:0007669"/>
    <property type="project" value="UniProtKB-KW"/>
</dbReference>
<dbReference type="GO" id="GO:1904293">
    <property type="term" value="P:negative regulation of ERAD pathway"/>
    <property type="evidence" value="ECO:0000315"/>
    <property type="project" value="ParkinsonsUK-UCL"/>
</dbReference>
<dbReference type="GO" id="GO:2000059">
    <property type="term" value="P:negative regulation of ubiquitin-dependent protein catabolic process"/>
    <property type="evidence" value="ECO:0000315"/>
    <property type="project" value="ParkinsonsUK-UCL"/>
</dbReference>
<dbReference type="GO" id="GO:0043161">
    <property type="term" value="P:proteasome-mediated ubiquitin-dependent protein catabolic process"/>
    <property type="evidence" value="ECO:0007669"/>
    <property type="project" value="InterPro"/>
</dbReference>
<dbReference type="GO" id="GO:0071108">
    <property type="term" value="P:protein K48-linked deubiquitination"/>
    <property type="evidence" value="ECO:0000315"/>
    <property type="project" value="UniProt"/>
</dbReference>
<dbReference type="GO" id="GO:0050920">
    <property type="term" value="P:regulation of chemotaxis"/>
    <property type="evidence" value="ECO:0000315"/>
    <property type="project" value="UniProtKB"/>
</dbReference>
<dbReference type="GO" id="GO:0061136">
    <property type="term" value="P:regulation of proteasomal protein catabolic process"/>
    <property type="evidence" value="ECO:0000315"/>
    <property type="project" value="UniProtKB"/>
</dbReference>
<dbReference type="CDD" id="cd02657">
    <property type="entry name" value="Peptidase_C19A"/>
    <property type="match status" value="1"/>
</dbReference>
<dbReference type="CDD" id="cd16104">
    <property type="entry name" value="Ubl_USP14_like"/>
    <property type="match status" value="1"/>
</dbReference>
<dbReference type="FunFam" id="3.10.20.90:FF:000119">
    <property type="entry name" value="Ubiquitin carboxyl-terminal hydrolase 14"/>
    <property type="match status" value="1"/>
</dbReference>
<dbReference type="FunFam" id="3.90.70.10:FF:000032">
    <property type="entry name" value="Ubiquitin carboxyl-terminal hydrolase 14"/>
    <property type="match status" value="1"/>
</dbReference>
<dbReference type="Gene3D" id="3.90.70.10">
    <property type="entry name" value="Cysteine proteinases"/>
    <property type="match status" value="1"/>
</dbReference>
<dbReference type="Gene3D" id="3.10.20.90">
    <property type="entry name" value="Phosphatidylinositol 3-kinase Catalytic Subunit, Chain A, domain 1"/>
    <property type="match status" value="1"/>
</dbReference>
<dbReference type="InterPro" id="IPR038765">
    <property type="entry name" value="Papain-like_cys_pep_sf"/>
</dbReference>
<dbReference type="InterPro" id="IPR001394">
    <property type="entry name" value="Peptidase_C19_UCH"/>
</dbReference>
<dbReference type="InterPro" id="IPR000626">
    <property type="entry name" value="Ubiquitin-like_dom"/>
</dbReference>
<dbReference type="InterPro" id="IPR029071">
    <property type="entry name" value="Ubiquitin-like_domsf"/>
</dbReference>
<dbReference type="InterPro" id="IPR019954">
    <property type="entry name" value="Ubiquitin_CS"/>
</dbReference>
<dbReference type="InterPro" id="IPR044635">
    <property type="entry name" value="UBP14-like"/>
</dbReference>
<dbReference type="InterPro" id="IPR018200">
    <property type="entry name" value="USP_CS"/>
</dbReference>
<dbReference type="InterPro" id="IPR028889">
    <property type="entry name" value="USP_dom"/>
</dbReference>
<dbReference type="PANTHER" id="PTHR43982">
    <property type="entry name" value="UBIQUITIN CARBOXYL-TERMINAL HYDROLASE"/>
    <property type="match status" value="1"/>
</dbReference>
<dbReference type="PANTHER" id="PTHR43982:SF1">
    <property type="entry name" value="UBIQUITIN CARBOXYL-TERMINAL HYDROLASE 14"/>
    <property type="match status" value="1"/>
</dbReference>
<dbReference type="Pfam" id="PF00443">
    <property type="entry name" value="UCH"/>
    <property type="match status" value="1"/>
</dbReference>
<dbReference type="SMART" id="SM00213">
    <property type="entry name" value="UBQ"/>
    <property type="match status" value="1"/>
</dbReference>
<dbReference type="SUPFAM" id="SSF54001">
    <property type="entry name" value="Cysteine proteinases"/>
    <property type="match status" value="1"/>
</dbReference>
<dbReference type="SUPFAM" id="SSF54236">
    <property type="entry name" value="Ubiquitin-like"/>
    <property type="match status" value="1"/>
</dbReference>
<dbReference type="PROSITE" id="PS00299">
    <property type="entry name" value="UBIQUITIN_1"/>
    <property type="match status" value="1"/>
</dbReference>
<dbReference type="PROSITE" id="PS50053">
    <property type="entry name" value="UBIQUITIN_2"/>
    <property type="match status" value="1"/>
</dbReference>
<dbReference type="PROSITE" id="PS00972">
    <property type="entry name" value="USP_1"/>
    <property type="match status" value="1"/>
</dbReference>
<dbReference type="PROSITE" id="PS00973">
    <property type="entry name" value="USP_2"/>
    <property type="match status" value="1"/>
</dbReference>
<dbReference type="PROSITE" id="PS50235">
    <property type="entry name" value="USP_3"/>
    <property type="match status" value="1"/>
</dbReference>
<organism>
    <name type="scientific">Homo sapiens</name>
    <name type="common">Human</name>
    <dbReference type="NCBI Taxonomy" id="9606"/>
    <lineage>
        <taxon>Eukaryota</taxon>
        <taxon>Metazoa</taxon>
        <taxon>Chordata</taxon>
        <taxon>Craniata</taxon>
        <taxon>Vertebrata</taxon>
        <taxon>Euteleostomi</taxon>
        <taxon>Mammalia</taxon>
        <taxon>Eutheria</taxon>
        <taxon>Euarchontoglires</taxon>
        <taxon>Primates</taxon>
        <taxon>Haplorrhini</taxon>
        <taxon>Catarrhini</taxon>
        <taxon>Hominidae</taxon>
        <taxon>Homo</taxon>
    </lineage>
</organism>
<reference key="1">
    <citation type="submission" date="1995-08" db="EMBL/GenBank/DDBJ databases">
        <title>tRNA-guanine transglycosylase cDNA from human placenta.</title>
        <authorList>
            <person name="Deshpande K.L."/>
            <person name="Katze J.R."/>
        </authorList>
    </citation>
    <scope>NUCLEOTIDE SEQUENCE [MRNA] (ISOFORM 1)</scope>
    <source>
        <tissue>Placenta</tissue>
    </source>
</reference>
<reference key="2">
    <citation type="submission" date="2003-05" db="EMBL/GenBank/DDBJ databases">
        <title>Cloning of human full-length CDSs in BD Creator(TM) system donor vector.</title>
        <authorList>
            <person name="Kalnine N."/>
            <person name="Chen X."/>
            <person name="Rolfs A."/>
            <person name="Halleck A."/>
            <person name="Hines L."/>
            <person name="Eisenstein S."/>
            <person name="Koundinya M."/>
            <person name="Raphael J."/>
            <person name="Moreira D."/>
            <person name="Kelley T."/>
            <person name="LaBaer J."/>
            <person name="Lin Y."/>
            <person name="Phelan M."/>
            <person name="Farmer A."/>
        </authorList>
    </citation>
    <scope>NUCLEOTIDE SEQUENCE [LARGE SCALE MRNA] (ISOFORM 1)</scope>
</reference>
<reference key="3">
    <citation type="journal article" date="2004" name="Nat. Genet.">
        <title>Complete sequencing and characterization of 21,243 full-length human cDNAs.</title>
        <authorList>
            <person name="Ota T."/>
            <person name="Suzuki Y."/>
            <person name="Nishikawa T."/>
            <person name="Otsuki T."/>
            <person name="Sugiyama T."/>
            <person name="Irie R."/>
            <person name="Wakamatsu A."/>
            <person name="Hayashi K."/>
            <person name="Sato H."/>
            <person name="Nagai K."/>
            <person name="Kimura K."/>
            <person name="Makita H."/>
            <person name="Sekine M."/>
            <person name="Obayashi M."/>
            <person name="Nishi T."/>
            <person name="Shibahara T."/>
            <person name="Tanaka T."/>
            <person name="Ishii S."/>
            <person name="Yamamoto J."/>
            <person name="Saito K."/>
            <person name="Kawai Y."/>
            <person name="Isono Y."/>
            <person name="Nakamura Y."/>
            <person name="Nagahari K."/>
            <person name="Murakami K."/>
            <person name="Yasuda T."/>
            <person name="Iwayanagi T."/>
            <person name="Wagatsuma M."/>
            <person name="Shiratori A."/>
            <person name="Sudo H."/>
            <person name="Hosoiri T."/>
            <person name="Kaku Y."/>
            <person name="Kodaira H."/>
            <person name="Kondo H."/>
            <person name="Sugawara M."/>
            <person name="Takahashi M."/>
            <person name="Kanda K."/>
            <person name="Yokoi T."/>
            <person name="Furuya T."/>
            <person name="Kikkawa E."/>
            <person name="Omura Y."/>
            <person name="Abe K."/>
            <person name="Kamihara K."/>
            <person name="Katsuta N."/>
            <person name="Sato K."/>
            <person name="Tanikawa M."/>
            <person name="Yamazaki M."/>
            <person name="Ninomiya K."/>
            <person name="Ishibashi T."/>
            <person name="Yamashita H."/>
            <person name="Murakawa K."/>
            <person name="Fujimori K."/>
            <person name="Tanai H."/>
            <person name="Kimata M."/>
            <person name="Watanabe M."/>
            <person name="Hiraoka S."/>
            <person name="Chiba Y."/>
            <person name="Ishida S."/>
            <person name="Ono Y."/>
            <person name="Takiguchi S."/>
            <person name="Watanabe S."/>
            <person name="Yosida M."/>
            <person name="Hotuta T."/>
            <person name="Kusano J."/>
            <person name="Kanehori K."/>
            <person name="Takahashi-Fujii A."/>
            <person name="Hara H."/>
            <person name="Tanase T.-O."/>
            <person name="Nomura Y."/>
            <person name="Togiya S."/>
            <person name="Komai F."/>
            <person name="Hara R."/>
            <person name="Takeuchi K."/>
            <person name="Arita M."/>
            <person name="Imose N."/>
            <person name="Musashino K."/>
            <person name="Yuuki H."/>
            <person name="Oshima A."/>
            <person name="Sasaki N."/>
            <person name="Aotsuka S."/>
            <person name="Yoshikawa Y."/>
            <person name="Matsunawa H."/>
            <person name="Ichihara T."/>
            <person name="Shiohata N."/>
            <person name="Sano S."/>
            <person name="Moriya S."/>
            <person name="Momiyama H."/>
            <person name="Satoh N."/>
            <person name="Takami S."/>
            <person name="Terashima Y."/>
            <person name="Suzuki O."/>
            <person name="Nakagawa S."/>
            <person name="Senoh A."/>
            <person name="Mizoguchi H."/>
            <person name="Goto Y."/>
            <person name="Shimizu F."/>
            <person name="Wakebe H."/>
            <person name="Hishigaki H."/>
            <person name="Watanabe T."/>
            <person name="Sugiyama A."/>
            <person name="Takemoto M."/>
            <person name="Kawakami B."/>
            <person name="Yamazaki M."/>
            <person name="Watanabe K."/>
            <person name="Kumagai A."/>
            <person name="Itakura S."/>
            <person name="Fukuzumi Y."/>
            <person name="Fujimori Y."/>
            <person name="Komiyama M."/>
            <person name="Tashiro H."/>
            <person name="Tanigami A."/>
            <person name="Fujiwara T."/>
            <person name="Ono T."/>
            <person name="Yamada K."/>
            <person name="Fujii Y."/>
            <person name="Ozaki K."/>
            <person name="Hirao M."/>
            <person name="Ohmori Y."/>
            <person name="Kawabata A."/>
            <person name="Hikiji T."/>
            <person name="Kobatake N."/>
            <person name="Inagaki H."/>
            <person name="Ikema Y."/>
            <person name="Okamoto S."/>
            <person name="Okitani R."/>
            <person name="Kawakami T."/>
            <person name="Noguchi S."/>
            <person name="Itoh T."/>
            <person name="Shigeta K."/>
            <person name="Senba T."/>
            <person name="Matsumura K."/>
            <person name="Nakajima Y."/>
            <person name="Mizuno T."/>
            <person name="Morinaga M."/>
            <person name="Sasaki M."/>
            <person name="Togashi T."/>
            <person name="Oyama M."/>
            <person name="Hata H."/>
            <person name="Watanabe M."/>
            <person name="Komatsu T."/>
            <person name="Mizushima-Sugano J."/>
            <person name="Satoh T."/>
            <person name="Shirai Y."/>
            <person name="Takahashi Y."/>
            <person name="Nakagawa K."/>
            <person name="Okumura K."/>
            <person name="Nagase T."/>
            <person name="Nomura N."/>
            <person name="Kikuchi H."/>
            <person name="Masuho Y."/>
            <person name="Yamashita R."/>
            <person name="Nakai K."/>
            <person name="Yada T."/>
            <person name="Nakamura Y."/>
            <person name="Ohara O."/>
            <person name="Isogai T."/>
            <person name="Sugano S."/>
        </authorList>
    </citation>
    <scope>NUCLEOTIDE SEQUENCE [LARGE SCALE MRNA] (ISOFORM 3)</scope>
    <source>
        <tissue>Brain</tissue>
    </source>
</reference>
<reference key="4">
    <citation type="journal article" date="2005" name="Nature">
        <title>DNA sequence and analysis of human chromosome 18.</title>
        <authorList>
            <person name="Nusbaum C."/>
            <person name="Zody M.C."/>
            <person name="Borowsky M.L."/>
            <person name="Kamal M."/>
            <person name="Kodira C.D."/>
            <person name="Taylor T.D."/>
            <person name="Whittaker C.A."/>
            <person name="Chang J.L."/>
            <person name="Cuomo C.A."/>
            <person name="Dewar K."/>
            <person name="FitzGerald M.G."/>
            <person name="Yang X."/>
            <person name="Abouelleil A."/>
            <person name="Allen N.R."/>
            <person name="Anderson S."/>
            <person name="Bloom T."/>
            <person name="Bugalter B."/>
            <person name="Butler J."/>
            <person name="Cook A."/>
            <person name="DeCaprio D."/>
            <person name="Engels R."/>
            <person name="Garber M."/>
            <person name="Gnirke A."/>
            <person name="Hafez N."/>
            <person name="Hall J.L."/>
            <person name="Norman C.H."/>
            <person name="Itoh T."/>
            <person name="Jaffe D.B."/>
            <person name="Kuroki Y."/>
            <person name="Lehoczky J."/>
            <person name="Lui A."/>
            <person name="Macdonald P."/>
            <person name="Mauceli E."/>
            <person name="Mikkelsen T.S."/>
            <person name="Naylor J.W."/>
            <person name="Nicol R."/>
            <person name="Nguyen C."/>
            <person name="Noguchi H."/>
            <person name="O'Leary S.B."/>
            <person name="Piqani B."/>
            <person name="Smith C.L."/>
            <person name="Talamas J.A."/>
            <person name="Topham K."/>
            <person name="Totoki Y."/>
            <person name="Toyoda A."/>
            <person name="Wain H.M."/>
            <person name="Young S.K."/>
            <person name="Zeng Q."/>
            <person name="Zimmer A.R."/>
            <person name="Fujiyama A."/>
            <person name="Hattori M."/>
            <person name="Birren B.W."/>
            <person name="Sakaki Y."/>
            <person name="Lander E.S."/>
        </authorList>
    </citation>
    <scope>NUCLEOTIDE SEQUENCE [LARGE SCALE GENOMIC DNA]</scope>
</reference>
<reference key="5">
    <citation type="journal article" date="2004" name="Genome Res.">
        <title>The status, quality, and expansion of the NIH full-length cDNA project: the Mammalian Gene Collection (MGC).</title>
        <authorList>
            <consortium name="The MGC Project Team"/>
        </authorList>
    </citation>
    <scope>NUCLEOTIDE SEQUENCE [LARGE SCALE MRNA] (ISOFORM 1)</scope>
    <source>
        <tissue>Skin</tissue>
    </source>
</reference>
<reference key="6">
    <citation type="submission" date="2005-06" db="EMBL/GenBank/DDBJ databases">
        <authorList>
            <person name="Heil O."/>
            <person name="Ebert L."/>
            <person name="Hennig S."/>
            <person name="Henze S."/>
            <person name="Radelof U."/>
            <person name="Schneider D."/>
            <person name="Korn B."/>
        </authorList>
    </citation>
    <scope>NUCLEOTIDE SEQUENCE [LARGE SCALE MRNA] OF 1-308 (ISOFORM 2)</scope>
    <source>
        <tissue>T-cell</tissue>
    </source>
</reference>
<reference key="7">
    <citation type="journal article" date="2003" name="Exp. Cell Res.">
        <title>Yeast two-hybrid screens imply involvement of Fanconi anemia proteins in transcription regulation, cell signaling, oxidative metabolism, and cellular transport.</title>
        <authorList>
            <person name="Reuter T.Y."/>
            <person name="Medhurst A.L."/>
            <person name="Waisfisz Q."/>
            <person name="Zhi Y."/>
            <person name="Herterich S."/>
            <person name="Hoehn H."/>
            <person name="Gross H.J."/>
            <person name="Joenje H."/>
            <person name="Hoatlin M.E."/>
            <person name="Mathew C.G."/>
            <person name="Huber P.A."/>
        </authorList>
    </citation>
    <scope>INTERACTION WITH FANCC</scope>
</reference>
<reference key="8">
    <citation type="journal article" date="2008" name="J. Proteome Res.">
        <title>Phosphorylation analysis of primary human T lymphocytes using sequential IMAC and titanium oxide enrichment.</title>
        <authorList>
            <person name="Carrascal M."/>
            <person name="Ovelleiro D."/>
            <person name="Casas V."/>
            <person name="Gay M."/>
            <person name="Abian J."/>
        </authorList>
    </citation>
    <scope>PHOSPHORYLATION [LARGE SCALE ANALYSIS] AT SER-143</scope>
    <scope>IDENTIFICATION BY MASS SPECTROMETRY [LARGE SCALE ANALYSIS]</scope>
    <source>
        <tissue>T-cell</tissue>
    </source>
</reference>
<reference key="9">
    <citation type="journal article" date="2008" name="Mol. Biol. Cell">
        <title>Relative structural and functional roles of multiple deubiquitylating proteins associated with mammalian 26S proteasome.</title>
        <authorList>
            <person name="Koulich E."/>
            <person name="Li X."/>
            <person name="DeMartino G.N."/>
        </authorList>
    </citation>
    <scope>ASSOCIATION WITH THE 26S PROTEASOME</scope>
    <scope>FUNCTION</scope>
</reference>
<reference key="10">
    <citation type="journal article" date="2008" name="Proc. Natl. Acad. Sci. U.S.A.">
        <title>A quantitative atlas of mitotic phosphorylation.</title>
        <authorList>
            <person name="Dephoure N."/>
            <person name="Zhou C."/>
            <person name="Villen J."/>
            <person name="Beausoleil S.A."/>
            <person name="Bakalarski C.E."/>
            <person name="Elledge S.J."/>
            <person name="Gygi S.P."/>
        </authorList>
    </citation>
    <scope>IDENTIFICATION BY MASS SPECTROMETRY [LARGE SCALE ANALYSIS]</scope>
    <source>
        <tissue>Cervix carcinoma</tissue>
    </source>
</reference>
<reference key="11">
    <citation type="journal article" date="2009" name="Biochem. Biophys. Res. Commun.">
        <title>USP14 inhibits ER-associated degradation via interaction with IRE1alpha.</title>
        <authorList>
            <person name="Nagai A."/>
            <person name="Kadowaki H."/>
            <person name="Maruyama T."/>
            <person name="Takeda K."/>
            <person name="Nishitoh H."/>
            <person name="Ichijo H."/>
        </authorList>
    </citation>
    <scope>FUNCTION</scope>
    <scope>INTERACTION WITH ERN1</scope>
</reference>
<reference key="12">
    <citation type="journal article" date="2009" name="J. Biol. Chem.">
        <title>Deubiquitination of CXCR4 by USP14 is critical for both CXCL12-induced CXCR4 degradation and chemotaxis but not ERK activation.</title>
        <authorList>
            <person name="Mines M.A."/>
            <person name="Goodwin J.S."/>
            <person name="Limbird L.E."/>
            <person name="Cui F.F."/>
            <person name="Fan G.H."/>
        </authorList>
    </citation>
    <scope>INTERACTION WITH CXCR4</scope>
    <scope>FUNCTION</scope>
    <scope>SUBCELLULAR LOCATION</scope>
</reference>
<reference key="13">
    <citation type="journal article" date="2009" name="Sci. Signal.">
        <title>Quantitative phosphoproteomic analysis of T cell receptor signaling reveals system-wide modulation of protein-protein interactions.</title>
        <authorList>
            <person name="Mayya V."/>
            <person name="Lundgren D.H."/>
            <person name="Hwang S.-I."/>
            <person name="Rezaul K."/>
            <person name="Wu L."/>
            <person name="Eng J.K."/>
            <person name="Rodionov V."/>
            <person name="Han D.K."/>
        </authorList>
    </citation>
    <scope>PHOSPHORYLATION [LARGE SCALE ANALYSIS] AT SER-143</scope>
    <scope>IDENTIFICATION BY MASS SPECTROMETRY [LARGE SCALE ANALYSIS]</scope>
    <source>
        <tissue>Leukemic T-cell</tissue>
    </source>
</reference>
<reference key="14">
    <citation type="journal article" date="2009" name="Science">
        <title>Lysine acetylation targets protein complexes and co-regulates major cellular functions.</title>
        <authorList>
            <person name="Choudhary C."/>
            <person name="Kumar C."/>
            <person name="Gnad F."/>
            <person name="Nielsen M.L."/>
            <person name="Rehman M."/>
            <person name="Walther T.C."/>
            <person name="Olsen J.V."/>
            <person name="Mann M."/>
        </authorList>
    </citation>
    <scope>ACETYLATION [LARGE SCALE ANALYSIS] AT LYS-449</scope>
    <scope>IDENTIFICATION BY MASS SPECTROMETRY [LARGE SCALE ANALYSIS]</scope>
</reference>
<reference key="15">
    <citation type="journal article" date="2010" name="Sci. Signal.">
        <title>Quantitative phosphoproteomics reveals widespread full phosphorylation site occupancy during mitosis.</title>
        <authorList>
            <person name="Olsen J.V."/>
            <person name="Vermeulen M."/>
            <person name="Santamaria A."/>
            <person name="Kumar C."/>
            <person name="Miller M.L."/>
            <person name="Jensen L.J."/>
            <person name="Gnad F."/>
            <person name="Cox J."/>
            <person name="Jensen T.S."/>
            <person name="Nigg E.A."/>
            <person name="Brunak S."/>
            <person name="Mann M."/>
        </authorList>
    </citation>
    <scope>PHOSPHORYLATION [LARGE SCALE ANALYSIS] AT SER-143 AND THR-235</scope>
    <scope>IDENTIFICATION BY MASS SPECTROMETRY [LARGE SCALE ANALYSIS]</scope>
    <source>
        <tissue>Cervix carcinoma</tissue>
    </source>
</reference>
<reference key="16">
    <citation type="journal article" date="2011" name="BMC Syst. Biol.">
        <title>Initial characterization of the human central proteome.</title>
        <authorList>
            <person name="Burkard T.R."/>
            <person name="Planyavsky M."/>
            <person name="Kaupe I."/>
            <person name="Breitwieser F.P."/>
            <person name="Buerckstuemmer T."/>
            <person name="Bennett K.L."/>
            <person name="Superti-Furga G."/>
            <person name="Colinge J."/>
        </authorList>
    </citation>
    <scope>IDENTIFICATION BY MASS SPECTROMETRY [LARGE SCALE ANALYSIS]</scope>
</reference>
<reference key="17">
    <citation type="journal article" date="2011" name="Sci. Signal.">
        <title>System-wide temporal characterization of the proteome and phosphoproteome of human embryonic stem cell differentiation.</title>
        <authorList>
            <person name="Rigbolt K.T."/>
            <person name="Prokhorova T.A."/>
            <person name="Akimov V."/>
            <person name="Henningsen J."/>
            <person name="Johansen P.T."/>
            <person name="Kratchmarova I."/>
            <person name="Kassem M."/>
            <person name="Mann M."/>
            <person name="Olsen J.V."/>
            <person name="Blagoev B."/>
        </authorList>
    </citation>
    <scope>PHOSPHORYLATION [LARGE SCALE ANALYSIS] AT SER-143</scope>
    <scope>IDENTIFICATION BY MASS SPECTROMETRY [LARGE SCALE ANALYSIS]</scope>
</reference>
<reference key="18">
    <citation type="journal article" date="2013" name="J. Proteome Res.">
        <title>Toward a comprehensive characterization of a human cancer cell phosphoproteome.</title>
        <authorList>
            <person name="Zhou H."/>
            <person name="Di Palma S."/>
            <person name="Preisinger C."/>
            <person name="Peng M."/>
            <person name="Polat A.N."/>
            <person name="Heck A.J."/>
            <person name="Mohammed S."/>
        </authorList>
    </citation>
    <scope>PHOSPHORYLATION [LARGE SCALE ANALYSIS] AT THR-52; SER-143; SER-237; SER-302 AND SER-432</scope>
    <scope>IDENTIFICATION BY MASS SPECTROMETRY [LARGE SCALE ANALYSIS]</scope>
    <source>
        <tissue>Cervix carcinoma</tissue>
        <tissue>Erythroleukemia</tissue>
    </source>
</reference>
<reference key="19">
    <citation type="journal article" date="2014" name="J. Proteomics">
        <title>An enzyme assisted RP-RPLC approach for in-depth analysis of human liver phosphoproteome.</title>
        <authorList>
            <person name="Bian Y."/>
            <person name="Song C."/>
            <person name="Cheng K."/>
            <person name="Dong M."/>
            <person name="Wang F."/>
            <person name="Huang J."/>
            <person name="Sun D."/>
            <person name="Wang L."/>
            <person name="Ye M."/>
            <person name="Zou H."/>
        </authorList>
    </citation>
    <scope>PHOSPHORYLATION [LARGE SCALE ANALYSIS] AT SER-143 AND THR-235</scope>
    <scope>IDENTIFICATION BY MASS SPECTROMETRY [LARGE SCALE ANALYSIS]</scope>
    <source>
        <tissue>Liver</tissue>
    </source>
</reference>
<reference key="20">
    <citation type="journal article" date="2016" name="Mol. Cell">
        <title>TRIM14 inhibits cGAS degradation mediated by selective autophagy receptor p62 to promote innate immune responses.</title>
        <authorList>
            <person name="Chen M."/>
            <person name="Meng Q."/>
            <person name="Qin Y."/>
            <person name="Liang P."/>
            <person name="Tan P."/>
            <person name="He L."/>
            <person name="Zhou Y."/>
            <person name="Chen Y."/>
            <person name="Huang J."/>
            <person name="Wang R.F."/>
            <person name="Cui J."/>
        </authorList>
    </citation>
    <scope>FUNCTION</scope>
    <scope>INTERACTION WITH TRIM14</scope>
</reference>
<reference key="21">
    <citation type="journal article" date="2017" name="Proc. Natl. Acad. Sci. U.S.A.">
        <title>Ubiquitinated proteins promote the association of proteasomes with the deubiquitinating enzyme Usp14 and the ubiquitin ligase Ube3c.</title>
        <authorList>
            <person name="Kuo C.L."/>
            <person name="Goldberg A.L."/>
        </authorList>
    </citation>
    <scope>FUNCTION</scope>
</reference>
<reference key="22">
    <citation type="journal article" date="2022" name="Proc. Natl. Acad. Sci. U.S.A.">
        <title>TRIM14 inhibits OPTN-mediated autophagic degradation of KDM4D to epigenetically regulate inflammation.</title>
        <authorList>
            <person name="Liu D."/>
            <person name="Zhao Z."/>
            <person name="She Y."/>
            <person name="Zhang L."/>
            <person name="Chen X."/>
            <person name="Ma L."/>
            <person name="Cui J."/>
        </authorList>
    </citation>
    <scope>FUNCTION</scope>
    <scope>INTERACTION WITH TRIM14</scope>
    <scope>SUBCELLULAR LOCATION</scope>
</reference>
<reference key="23">
    <citation type="journal article" date="2005" name="EMBO J.">
        <title>Structure and mechanisms of the proteasome-associated deubiquitinating enzyme USP14.</title>
        <authorList>
            <person name="Hu M."/>
            <person name="Li P."/>
            <person name="Song L."/>
            <person name="Jeffrey P.D."/>
            <person name="Chenova T.A."/>
            <person name="Wilkinson K.D."/>
            <person name="Cohen R.E."/>
            <person name="Shi Y."/>
        </authorList>
    </citation>
    <scope>X-RAY CRYSTALLOGRAPHY (3.2 ANGSTROMS) OF 91-494</scope>
    <scope>CATALYTIC ACTIVITY</scope>
    <scope>ACTIVE SITE</scope>
</reference>
<protein>
    <recommendedName>
        <fullName>Ubiquitin carboxyl-terminal hydrolase 14</fullName>
        <ecNumber>3.4.19.12</ecNumber>
    </recommendedName>
    <alternativeName>
        <fullName>Deubiquitinating enzyme 14</fullName>
    </alternativeName>
    <alternativeName>
        <fullName>Ubiquitin thioesterase 14</fullName>
    </alternativeName>
    <alternativeName>
        <fullName>Ubiquitin-specific-processing protease 14</fullName>
    </alternativeName>
</protein>
<evidence type="ECO:0000250" key="1">
    <source>
        <dbReference type="UniProtKB" id="Q9JMA1"/>
    </source>
</evidence>
<evidence type="ECO:0000255" key="2">
    <source>
        <dbReference type="PROSITE-ProRule" id="PRU00214"/>
    </source>
</evidence>
<evidence type="ECO:0000255" key="3">
    <source>
        <dbReference type="PROSITE-ProRule" id="PRU10092"/>
    </source>
</evidence>
<evidence type="ECO:0000255" key="4">
    <source>
        <dbReference type="PROSITE-ProRule" id="PRU10093"/>
    </source>
</evidence>
<evidence type="ECO:0000269" key="5">
    <source>
    </source>
</evidence>
<evidence type="ECO:0000269" key="6">
    <source>
    </source>
</evidence>
<evidence type="ECO:0000269" key="7">
    <source>
    </source>
</evidence>
<evidence type="ECO:0000269" key="8">
    <source>
    </source>
</evidence>
<evidence type="ECO:0000269" key="9">
    <source>
    </source>
</evidence>
<evidence type="ECO:0000269" key="10">
    <source>
    </source>
</evidence>
<evidence type="ECO:0000269" key="11">
    <source>
    </source>
</evidence>
<evidence type="ECO:0000269" key="12">
    <source>
    </source>
</evidence>
<evidence type="ECO:0000303" key="13">
    <source>
    </source>
</evidence>
<evidence type="ECO:0000303" key="14">
    <source ref="6"/>
</evidence>
<evidence type="ECO:0000305" key="15"/>
<evidence type="ECO:0000305" key="16">
    <source>
    </source>
</evidence>
<evidence type="ECO:0000305" key="17">
    <source ref="1"/>
</evidence>
<evidence type="ECO:0007744" key="18">
    <source>
    </source>
</evidence>
<evidence type="ECO:0007744" key="19">
    <source>
    </source>
</evidence>
<evidence type="ECO:0007744" key="20">
    <source>
    </source>
</evidence>
<evidence type="ECO:0007744" key="21">
    <source>
    </source>
</evidence>
<evidence type="ECO:0007744" key="22">
    <source>
    </source>
</evidence>
<evidence type="ECO:0007744" key="23">
    <source>
    </source>
</evidence>
<evidence type="ECO:0007744" key="24">
    <source>
    </source>
</evidence>
<evidence type="ECO:0007829" key="25">
    <source>
        <dbReference type="PDB" id="2AYN"/>
    </source>
</evidence>
<evidence type="ECO:0007829" key="26">
    <source>
        <dbReference type="PDB" id="6IIK"/>
    </source>
</evidence>
<evidence type="ECO:0007829" key="27">
    <source>
        <dbReference type="PDB" id="6IIL"/>
    </source>
</evidence>
<evidence type="ECO:0007829" key="28">
    <source>
        <dbReference type="PDB" id="6LVS"/>
    </source>
</evidence>
<keyword id="KW-0002">3D-structure</keyword>
<keyword id="KW-0007">Acetylation</keyword>
<keyword id="KW-0025">Alternative splicing</keyword>
<keyword id="KW-1003">Cell membrane</keyword>
<keyword id="KW-0963">Cytoplasm</keyword>
<keyword id="KW-0378">Hydrolase</keyword>
<keyword id="KW-0391">Immunity</keyword>
<keyword id="KW-0399">Innate immunity</keyword>
<keyword id="KW-0472">Membrane</keyword>
<keyword id="KW-0597">Phosphoprotein</keyword>
<keyword id="KW-0645">Protease</keyword>
<keyword id="KW-0647">Proteasome</keyword>
<keyword id="KW-1267">Proteomics identification</keyword>
<keyword id="KW-1185">Reference proteome</keyword>
<keyword id="KW-0788">Thiol protease</keyword>
<keyword id="KW-0833">Ubl conjugation pathway</keyword>
<accession>P54578</accession>
<accession>B7Z4N8</accession>
<accession>J3QRZ5</accession>
<accession>Q53XY5</accession>
<sequence>MPLYSVTVKWGKEKFEGVELNTDEPPMVFKAQLFALTGVQPARQKVMVKGGTLKDDDWGNIKIKNGMTLLMMGSADALPEEPSAKTVFVEDMTEEQLASAMELPCGLTNLGNTCYMNATVQCIRSVPELKDALKRYAGALRASGEMASAQYITAALRDLFDSMDKTSSSIPPIILLQFLHMAFPQFAEKGEQGQYLQQDANECWIQMMRVLQQKLEAIEDDSVKETDSSSASAATPSKKKSLIDQFFGVEFETTMKCTESEEEEVTKGKENQLQLSCFINQEVKYLFTGLKLRLQEEITKQSPTLQRNALYIKSSKISRLPAYLTIQMVRFFYKEKESVNAKVLKDVKFPLMLDMYELCTPELQEKMVSFRSKFKDLEDKKVNQQPNTSDKKSSPQKEVKYEPFSFADDIGSNNCGYYDLQAVLTHQGRSSSSGHYVSWVKRKQDEWIKFDDDKVSIVTPEDILRLSGGGDWHIAYVLLYGPRRVEIMEEESEQ</sequence>
<proteinExistence type="evidence at protein level"/>